<name>RS14Z_BORBZ</name>
<comment type="function">
    <text evidence="1">Binds 16S rRNA, required for the assembly of 30S particles and may also be responsible for determining the conformation of the 16S rRNA at the A site.</text>
</comment>
<comment type="cofactor">
    <cofactor evidence="1">
        <name>Zn(2+)</name>
        <dbReference type="ChEBI" id="CHEBI:29105"/>
    </cofactor>
    <text evidence="1">Binds 1 zinc ion per subunit.</text>
</comment>
<comment type="subunit">
    <text evidence="1">Part of the 30S ribosomal subunit. Contacts proteins S3 and S10.</text>
</comment>
<comment type="similarity">
    <text evidence="1">Belongs to the universal ribosomal protein uS14 family. Zinc-binding uS14 subfamily.</text>
</comment>
<protein>
    <recommendedName>
        <fullName evidence="1">Small ribosomal subunit protein uS14</fullName>
    </recommendedName>
    <alternativeName>
        <fullName evidence="2">30S ribosomal protein S14 type Z</fullName>
    </alternativeName>
</protein>
<keyword id="KW-0479">Metal-binding</keyword>
<keyword id="KW-0687">Ribonucleoprotein</keyword>
<keyword id="KW-0689">Ribosomal protein</keyword>
<keyword id="KW-0694">RNA-binding</keyword>
<keyword id="KW-0699">rRNA-binding</keyword>
<keyword id="KW-0862">Zinc</keyword>
<proteinExistence type="inferred from homology"/>
<accession>B7J256</accession>
<evidence type="ECO:0000255" key="1">
    <source>
        <dbReference type="HAMAP-Rule" id="MF_01364"/>
    </source>
</evidence>
<evidence type="ECO:0000305" key="2"/>
<reference key="1">
    <citation type="journal article" date="2011" name="J. Bacteriol.">
        <title>Whole-genome sequences of thirteen isolates of Borrelia burgdorferi.</title>
        <authorList>
            <person name="Schutzer S.E."/>
            <person name="Fraser-Liggett C.M."/>
            <person name="Casjens S.R."/>
            <person name="Qiu W.G."/>
            <person name="Dunn J.J."/>
            <person name="Mongodin E.F."/>
            <person name="Luft B.J."/>
        </authorList>
    </citation>
    <scope>NUCLEOTIDE SEQUENCE [LARGE SCALE GENOMIC DNA]</scope>
    <source>
        <strain>ZS7</strain>
    </source>
</reference>
<gene>
    <name evidence="1" type="primary">rpsZ</name>
    <name evidence="1" type="synonym">rpsN</name>
    <name type="ordered locus">BbuZS7_0502</name>
</gene>
<dbReference type="EMBL" id="CP001205">
    <property type="protein sequence ID" value="ACK74860.1"/>
    <property type="molecule type" value="Genomic_DNA"/>
</dbReference>
<dbReference type="RefSeq" id="WP_002557082.1">
    <property type="nucleotide sequence ID" value="NC_011728.1"/>
</dbReference>
<dbReference type="SMR" id="B7J256"/>
<dbReference type="KEGG" id="bbz:BbuZS7_0502"/>
<dbReference type="HOGENOM" id="CLU_139869_3_0_12"/>
<dbReference type="Proteomes" id="UP000006901">
    <property type="component" value="Chromosome"/>
</dbReference>
<dbReference type="GO" id="GO:0005737">
    <property type="term" value="C:cytoplasm"/>
    <property type="evidence" value="ECO:0007669"/>
    <property type="project" value="UniProtKB-ARBA"/>
</dbReference>
<dbReference type="GO" id="GO:0015935">
    <property type="term" value="C:small ribosomal subunit"/>
    <property type="evidence" value="ECO:0007669"/>
    <property type="project" value="TreeGrafter"/>
</dbReference>
<dbReference type="GO" id="GO:0019843">
    <property type="term" value="F:rRNA binding"/>
    <property type="evidence" value="ECO:0007669"/>
    <property type="project" value="UniProtKB-UniRule"/>
</dbReference>
<dbReference type="GO" id="GO:0003735">
    <property type="term" value="F:structural constituent of ribosome"/>
    <property type="evidence" value="ECO:0007669"/>
    <property type="project" value="InterPro"/>
</dbReference>
<dbReference type="GO" id="GO:0008270">
    <property type="term" value="F:zinc ion binding"/>
    <property type="evidence" value="ECO:0007669"/>
    <property type="project" value="UniProtKB-UniRule"/>
</dbReference>
<dbReference type="GO" id="GO:0006412">
    <property type="term" value="P:translation"/>
    <property type="evidence" value="ECO:0007669"/>
    <property type="project" value="UniProtKB-UniRule"/>
</dbReference>
<dbReference type="FunFam" id="4.10.830.10:FF:000001">
    <property type="entry name" value="30S ribosomal protein S14 type Z"/>
    <property type="match status" value="1"/>
</dbReference>
<dbReference type="Gene3D" id="4.10.830.10">
    <property type="entry name" value="30s Ribosomal Protein S14, Chain N"/>
    <property type="match status" value="1"/>
</dbReference>
<dbReference type="HAMAP" id="MF_01364_B">
    <property type="entry name" value="Ribosomal_uS14_2_B"/>
    <property type="match status" value="1"/>
</dbReference>
<dbReference type="InterPro" id="IPR001209">
    <property type="entry name" value="Ribosomal_uS14"/>
</dbReference>
<dbReference type="InterPro" id="IPR023053">
    <property type="entry name" value="Ribosomal_uS14_bact"/>
</dbReference>
<dbReference type="InterPro" id="IPR018271">
    <property type="entry name" value="Ribosomal_uS14_CS"/>
</dbReference>
<dbReference type="InterPro" id="IPR043140">
    <property type="entry name" value="Ribosomal_uS14_sf"/>
</dbReference>
<dbReference type="NCBIfam" id="NF005974">
    <property type="entry name" value="PRK08061.1"/>
    <property type="match status" value="1"/>
</dbReference>
<dbReference type="PANTHER" id="PTHR19836">
    <property type="entry name" value="30S RIBOSOMAL PROTEIN S14"/>
    <property type="match status" value="1"/>
</dbReference>
<dbReference type="PANTHER" id="PTHR19836:SF19">
    <property type="entry name" value="SMALL RIBOSOMAL SUBUNIT PROTEIN US14M"/>
    <property type="match status" value="1"/>
</dbReference>
<dbReference type="Pfam" id="PF00253">
    <property type="entry name" value="Ribosomal_S14"/>
    <property type="match status" value="1"/>
</dbReference>
<dbReference type="SUPFAM" id="SSF57716">
    <property type="entry name" value="Glucocorticoid receptor-like (DNA-binding domain)"/>
    <property type="match status" value="1"/>
</dbReference>
<dbReference type="PROSITE" id="PS00527">
    <property type="entry name" value="RIBOSOMAL_S14"/>
    <property type="match status" value="1"/>
</dbReference>
<organism>
    <name type="scientific">Borreliella burgdorferi (strain ZS7)</name>
    <name type="common">Borrelia burgdorferi</name>
    <dbReference type="NCBI Taxonomy" id="445985"/>
    <lineage>
        <taxon>Bacteria</taxon>
        <taxon>Pseudomonadati</taxon>
        <taxon>Spirochaetota</taxon>
        <taxon>Spirochaetia</taxon>
        <taxon>Spirochaetales</taxon>
        <taxon>Borreliaceae</taxon>
        <taxon>Borreliella</taxon>
    </lineage>
</organism>
<sequence length="61" mass="7203">MAKKSMIIRALRKPKYKTRQNNRCKLCGRPRGYLRDFCMCRICFRKYASEGLIPGVSKSSW</sequence>
<feature type="chain" id="PRO_1000143886" description="Small ribosomal subunit protein uS14">
    <location>
        <begin position="1"/>
        <end position="61"/>
    </location>
</feature>
<feature type="binding site" evidence="1">
    <location>
        <position position="24"/>
    </location>
    <ligand>
        <name>Zn(2+)</name>
        <dbReference type="ChEBI" id="CHEBI:29105"/>
    </ligand>
</feature>
<feature type="binding site" evidence="1">
    <location>
        <position position="27"/>
    </location>
    <ligand>
        <name>Zn(2+)</name>
        <dbReference type="ChEBI" id="CHEBI:29105"/>
    </ligand>
</feature>
<feature type="binding site" evidence="1">
    <location>
        <position position="40"/>
    </location>
    <ligand>
        <name>Zn(2+)</name>
        <dbReference type="ChEBI" id="CHEBI:29105"/>
    </ligand>
</feature>
<feature type="binding site" evidence="1">
    <location>
        <position position="43"/>
    </location>
    <ligand>
        <name>Zn(2+)</name>
        <dbReference type="ChEBI" id="CHEBI:29105"/>
    </ligand>
</feature>